<reference key="1">
    <citation type="journal article" date="1989" name="Arch. Biochem. Biophys.">
        <title>Homology of the D-galactose-specific lectins from Artocarpus integrifolia and Maclura pomifera and the role of an unusual small polypeptide subunit.</title>
        <authorList>
            <person name="Young N.M."/>
            <person name="Johnston R.A.Z."/>
            <person name="Szabo A.G."/>
            <person name="Watson D.C."/>
        </authorList>
    </citation>
    <scope>PROTEIN SEQUENCE</scope>
    <source>
        <tissue>Seed</tissue>
    </source>
</reference>
<reference key="2">
    <citation type="journal article" date="1992" name="Biochem. J.">
        <title>Primary structure of a Thomsen-Friedenreich-antigen-specific lectin, jacalin [Artocarpus integrifolia (jack fruit) agglutinin]. Evidence for the presence of an internal repeat.</title>
        <authorList>
            <person name="Mahanta S.K."/>
            <person name="Sanker S."/>
            <person name="Prasad Rao N.V.S.A.V."/>
            <person name="Swamy M.J."/>
            <person name="Surolia A."/>
        </authorList>
    </citation>
    <scope>PROTEIN SEQUENCE</scope>
</reference>
<name>LECB2_ARTIN</name>
<feature type="peptide" id="PRO_0000044033" description="Agglutinin beta-2 chain">
    <location>
        <begin position="1"/>
        <end position="21"/>
    </location>
</feature>
<feature type="region of interest" description="Disordered" evidence="1">
    <location>
        <begin position="1"/>
        <end position="21"/>
    </location>
</feature>
<feature type="compositionally biased region" description="Polar residues" evidence="1">
    <location>
        <begin position="1"/>
        <end position="10"/>
    </location>
</feature>
<feature type="sequence conflict" description="In Ref. 1; AA sequence." evidence="2" ref="1">
    <location>
        <position position="21"/>
    </location>
</feature>
<sequence length="21" mass="2173">NEQSGKSQTVIVGPWGAQVST</sequence>
<evidence type="ECO:0000256" key="1">
    <source>
        <dbReference type="SAM" id="MobiDB-lite"/>
    </source>
</evidence>
<evidence type="ECO:0000305" key="2"/>
<keyword id="KW-0903">Direct protein sequencing</keyword>
<keyword id="KW-0388">IgA-binding protein</keyword>
<keyword id="KW-0430">Lectin</keyword>
<organism>
    <name type="scientific">Artocarpus integer</name>
    <name type="common">Jack fruit</name>
    <name type="synonym">Artocarpus integrifolia</name>
    <dbReference type="NCBI Taxonomy" id="3490"/>
    <lineage>
        <taxon>Eukaryota</taxon>
        <taxon>Viridiplantae</taxon>
        <taxon>Streptophyta</taxon>
        <taxon>Embryophyta</taxon>
        <taxon>Tracheophyta</taxon>
        <taxon>Spermatophyta</taxon>
        <taxon>Magnoliopsida</taxon>
        <taxon>eudicotyledons</taxon>
        <taxon>Gunneridae</taxon>
        <taxon>Pentapetalae</taxon>
        <taxon>rosids</taxon>
        <taxon>fabids</taxon>
        <taxon>Rosales</taxon>
        <taxon>Moraceae</taxon>
        <taxon>Artocarpeae</taxon>
        <taxon>Artocarpus</taxon>
    </lineage>
</organism>
<dbReference type="GO" id="GO:0030246">
    <property type="term" value="F:carbohydrate binding"/>
    <property type="evidence" value="ECO:0000250"/>
    <property type="project" value="UniProtKB"/>
</dbReference>
<dbReference type="GO" id="GO:0019862">
    <property type="term" value="F:IgA binding"/>
    <property type="evidence" value="ECO:0000250"/>
    <property type="project" value="UniProtKB"/>
</dbReference>
<proteinExistence type="evidence at protein level"/>
<protein>
    <recommendedName>
        <fullName>Agglutinin beta-2 chain</fullName>
    </recommendedName>
    <alternativeName>
        <fullName>Jacalin beta-2 chain</fullName>
    </alternativeName>
</protein>
<accession>P18672</accession>
<comment type="function">
    <text>D-galactose-specific lectin, binds the T-antigen structure Gal-beta1,3-GalNAc (Thomsen-Friedenreich-antigen-specific lectin). Potent and selective stimulant of distinct T- and B-cell functions. Shows a unique ability to specifically recognize IgA-1 from human serum.</text>
</comment>
<comment type="subunit">
    <text>Tetramer of four alpha chains associated with two or four beta chains.</text>
</comment>
<comment type="similarity">
    <text evidence="2">Belongs to the jacalin lectin family.</text>
</comment>